<proteinExistence type="evidence at protein level"/>
<organism>
    <name type="scientific">Brevibacterium linens</name>
    <dbReference type="NCBI Taxonomy" id="1703"/>
    <lineage>
        <taxon>Bacteria</taxon>
        <taxon>Bacillati</taxon>
        <taxon>Actinomycetota</taxon>
        <taxon>Actinomycetes</taxon>
        <taxon>Micrococcales</taxon>
        <taxon>Brevibacteriaceae</taxon>
        <taxon>Brevibacterium</taxon>
    </lineage>
</organism>
<sequence length="266" mass="28597">MNNLYRELAPIPGPAWAEIEEEARRTFKRNIAGRRIVDVAGPTGFETSAVTTGHIRDVQSETSGLQVKQRIVQEYIELRTPFTVTRQAIDDVARGSGDSDWQPVKDAATTIAMAEDRAILHGLDAAGIGGIVPGSSNAAVAIPDAVEDFADAVAQALSVLRTVGVDGPYSLLLSSAEYTKVSESTDHGYPIREHLSRQLGAGEIIWAPALEGALLVSTRGGDYELHLGQDLSIGYYSHDSETVELYLQETFGFLALTDESSVPLSL</sequence>
<reference key="1">
    <citation type="journal article" date="1996" name="Appl. Environ. Microbiol.">
        <title>Nucleotide sequence and taxonomical distribution of the bacteriocin gene lin cloned from Brevibacterium linens M18.</title>
        <authorList>
            <person name="Valdes-Stauber N."/>
            <person name="Scherer S."/>
        </authorList>
    </citation>
    <scope>NUCLEOTIDE SEQUENCE [GENOMIC DNA]</scope>
    <source>
        <strain>M18</strain>
    </source>
</reference>
<reference key="2">
    <citation type="submission" date="2017-03" db="EMBL/GenBank/DDBJ databases">
        <authorList>
            <person name="Monnet C."/>
        </authorList>
    </citation>
    <scope>NUCLEOTIDE SEQUENCE [LARGE SCALE GENOMIC DNA]</scope>
    <source>
        <strain>Mu101</strain>
    </source>
</reference>
<reference key="3">
    <citation type="journal article" date="2019" name="Front. Microbiol.">
        <title>Mobilome of Brevibacterium aurantiacum Sheds Light on Its Genetic Diversity and Its Adaptation to Smear-Ripened Cheeses.</title>
        <authorList>
            <person name="Levesque S."/>
            <person name="de Melo A.G."/>
            <person name="Labrie S.J."/>
            <person name="Moineau S."/>
        </authorList>
    </citation>
    <scope>NUCLEOTIDE SEQUENCE [LARGE SCALE GENOMIC DNA]</scope>
    <source>
        <strain>ATCC 19391</strain>
    </source>
</reference>
<reference key="4">
    <citation type="journal article" date="1994" name="Appl. Environ. Microbiol.">
        <title>Isolation and characterization of Linocin M18, a bacteriocin produced by Brevibacterium linens.</title>
        <authorList>
            <person name="Valdes-Stauber N."/>
            <person name="Scherer S."/>
        </authorList>
    </citation>
    <scope>PROTEIN SEQUENCE OF 1-19</scope>
    <scope>FUNCTION AS A BACTERIOCIN</scope>
    <scope>SUBUNIT</scope>
    <scope>SUBCELLULAR LOCATION</scope>
    <source>
        <strain>M18</strain>
    </source>
</reference>
<reference key="5">
    <citation type="journal article" date="2008" name="Nat. Struct. Mol. Biol.">
        <title>Structural basis of enzyme encapsulation into a bacterial nanocompartment.</title>
        <authorList>
            <person name="Sutter M."/>
            <person name="Boehringer D."/>
            <person name="Gutmann S."/>
            <person name="Gunther S."/>
            <person name="Prangishvili D."/>
            <person name="Loessner M.J."/>
            <person name="Stetter K.O."/>
            <person name="Weber-Ban E."/>
            <person name="Ban N."/>
        </authorList>
    </citation>
    <scope>FUNCTION</scope>
    <scope>NOT A BACTERIOCIN</scope>
    <scope>SUBUNIT</scope>
    <scope>SUBCELLULAR LOCATION</scope>
    <source>
        <strain>M18</strain>
    </source>
</reference>
<reference key="6">
    <citation type="journal article" date="2016" name="Biomacromolecules">
        <title>Assembly and Mechanical Properties of the Cargo-Free and Cargo-Loaded Bacterial Nanocompartment Encapsulin.</title>
        <authorList>
            <person name="Snijder J."/>
            <person name="Kononova O."/>
            <person name="Barbu I.M."/>
            <person name="Uetrecht C."/>
            <person name="Rurup W.F."/>
            <person name="Burnley R.J."/>
            <person name="Koay M.S."/>
            <person name="Cornelissen J.J."/>
            <person name="Roos W.H."/>
            <person name="Barsegov V."/>
            <person name="Wuite G.J."/>
            <person name="Heck A.J."/>
        </authorList>
    </citation>
    <scope>FUNCTION</scope>
    <scope>STABILITY</scope>
    <scope>SUBUNIT</scope>
    <scope>SUBCELLULAR LOCATION</scope>
    <scope>MASS SPECTROMETRY</scope>
</reference>
<reference key="7">
    <citation type="journal article" date="2017" name="ACS Nano">
        <title>Structural Characterization of Native and Modified Encapsulins as Nanoplatforms for in Vitro Catalysis and Cellular Uptake.</title>
        <authorList>
            <person name="Putri R.M."/>
            <person name="Allende-Ballestero C."/>
            <person name="Luque D."/>
            <person name="Klem R."/>
            <person name="Rousou K.A."/>
            <person name="Liu A."/>
            <person name="Traulsen C.H."/>
            <person name="Rurup W.F."/>
            <person name="Koay M.S.T."/>
            <person name="Caston J.R."/>
            <person name="Cornelissen J.J.L.M."/>
        </authorList>
    </citation>
    <scope>STRUCTURE BY ELECTRON MICROSCOPY (11.4 ANGSTROMS)</scope>
    <scope>FUNCTION</scope>
    <scope>STABILITY</scope>
    <scope>SUBUNIT</scope>
    <scope>SUBCELLULAR LOCATION</scope>
    <scope>BIOTECHNOLOGY</scope>
</reference>
<reference key="8">
    <citation type="journal article" date="2021" name="Nat. Commun.">
        <title>Large-scale computational discovery and analysis of virus-derived microbial nanocompartments.</title>
        <authorList>
            <person name="Andreas M.P."/>
            <person name="Giessen T.W."/>
        </authorList>
    </citation>
    <scope>CLASSIFICATION</scope>
</reference>
<reference evidence="13" key="9">
    <citation type="submission" date="2020-12" db="PDB data bank">
        <title>Three-dimensional cryoEM structure of Brevibacterium linens encapsulin.</title>
        <authorList>
            <person name="Allende-Ballestero C."/>
            <person name="Luque D."/>
            <person name="Klem R."/>
            <person name="Cornelissen J.J.L.M."/>
            <person name="Caston J.R."/>
        </authorList>
    </citation>
    <scope>STRUCTURE BY ELECTRON MICROSCOPY (2.28 ANGSTROMS) OF 2-266</scope>
</reference>
<dbReference type="EMBL" id="X93588">
    <property type="protein sequence ID" value="CAA63787.1"/>
    <property type="molecule type" value="Genomic_DNA"/>
</dbReference>
<dbReference type="EMBL" id="CP026734">
    <property type="protein sequence ID" value="AZT99314.1"/>
    <property type="molecule type" value="Genomic_DNA"/>
</dbReference>
<dbReference type="EMBL" id="FXZA01000002">
    <property type="protein sequence ID" value="SMX69863.1"/>
    <property type="molecule type" value="Genomic_DNA"/>
</dbReference>
<dbReference type="PDB" id="7BCV">
    <property type="method" value="EM"/>
    <property type="resolution" value="2.28 A"/>
    <property type="chains" value="A=2-266"/>
</dbReference>
<dbReference type="PDBsum" id="7BCV"/>
<dbReference type="EMDB" id="EMD-12144"/>
<dbReference type="SMR" id="Q45296"/>
<dbReference type="IntAct" id="Q45296">
    <property type="interactions" value="1"/>
</dbReference>
<dbReference type="STRING" id="1703.BLSMQ_0026"/>
<dbReference type="MEROPS" id="U56.001"/>
<dbReference type="OrthoDB" id="2922at2"/>
<dbReference type="Proteomes" id="UP000234498">
    <property type="component" value="Unassembled WGS sequence"/>
</dbReference>
<dbReference type="GO" id="GO:0140737">
    <property type="term" value="C:encapsulin nanocompartment"/>
    <property type="evidence" value="ECO:0000314"/>
    <property type="project" value="UniProtKB"/>
</dbReference>
<dbReference type="Gene3D" id="3.30.2400.30">
    <property type="match status" value="1"/>
</dbReference>
<dbReference type="Gene3D" id="3.30.2320.10">
    <property type="entry name" value="hypothetical protein PF0899 domain"/>
    <property type="match status" value="1"/>
</dbReference>
<dbReference type="InterPro" id="IPR007544">
    <property type="entry name" value="ENCAP"/>
</dbReference>
<dbReference type="InterPro" id="IPR051429">
    <property type="entry name" value="Encapsulin_nc"/>
</dbReference>
<dbReference type="NCBIfam" id="NF041155">
    <property type="entry name" value="encap_f1"/>
    <property type="match status" value="1"/>
</dbReference>
<dbReference type="PANTHER" id="PTHR37165">
    <property type="entry name" value="PEPTIDASE U56 FAMILY"/>
    <property type="match status" value="1"/>
</dbReference>
<dbReference type="PANTHER" id="PTHR37165:SF1">
    <property type="entry name" value="TYPE 1 ENCAPSULIN SHELL PROTEIN"/>
    <property type="match status" value="1"/>
</dbReference>
<dbReference type="Pfam" id="PF04454">
    <property type="entry name" value="Linocin_M18"/>
    <property type="match status" value="1"/>
</dbReference>
<dbReference type="PIRSF" id="PIRSF019254">
    <property type="entry name" value="CFP29"/>
    <property type="match status" value="1"/>
</dbReference>
<accession>Q45296</accession>
<accession>A0A2H1I3X5</accession>
<protein>
    <recommendedName>
        <fullName>Type 1 encapsulin shell protein</fullName>
    </recommendedName>
    <alternativeName>
        <fullName evidence="6">Linocin M18</fullName>
    </alternativeName>
    <alternativeName>
        <fullName evidence="5">M18 encapsulin</fullName>
    </alternativeName>
</protein>
<evidence type="ECO:0000269" key="1">
    <source>
    </source>
</evidence>
<evidence type="ECO:0000269" key="2">
    <source>
    </source>
</evidence>
<evidence type="ECO:0000269" key="3">
    <source>
    </source>
</evidence>
<evidence type="ECO:0000269" key="4">
    <source>
    </source>
</evidence>
<evidence type="ECO:0000303" key="5">
    <source>
    </source>
</evidence>
<evidence type="ECO:0000303" key="6">
    <source>
    </source>
</evidence>
<evidence type="ECO:0000303" key="7">
    <source>
    </source>
</evidence>
<evidence type="ECO:0000305" key="8"/>
<evidence type="ECO:0000305" key="9">
    <source>
    </source>
</evidence>
<evidence type="ECO:0000305" key="10">
    <source>
    </source>
</evidence>
<evidence type="ECO:0000312" key="11">
    <source>
        <dbReference type="EMBL" id="AZT99314.1"/>
    </source>
</evidence>
<evidence type="ECO:0000312" key="12">
    <source>
        <dbReference type="EMBL" id="SMX69863.1"/>
    </source>
</evidence>
<evidence type="ECO:0007744" key="13">
    <source>
        <dbReference type="PDB" id="7BCV"/>
    </source>
</evidence>
<evidence type="ECO:0007829" key="14">
    <source>
        <dbReference type="PDB" id="7BCV"/>
    </source>
</evidence>
<feature type="chain" id="PRO_0000343953" description="Type 1 encapsulin shell protein">
    <location>
        <begin position="1"/>
        <end position="266"/>
    </location>
</feature>
<feature type="sequence conflict" description="In Ref. 4; AA sequence." evidence="8" ref="4">
    <original>W</original>
    <variation>A</variation>
    <location>
        <position position="16"/>
    </location>
</feature>
<feature type="helix" evidence="14">
    <location>
        <begin position="6"/>
        <end position="8"/>
    </location>
</feature>
<feature type="helix" evidence="14">
    <location>
        <begin position="13"/>
        <end position="30"/>
    </location>
</feature>
<feature type="helix" evidence="14">
    <location>
        <begin position="33"/>
        <end position="35"/>
    </location>
</feature>
<feature type="strand" evidence="14">
    <location>
        <begin position="37"/>
        <end position="40"/>
    </location>
</feature>
<feature type="strand" evidence="14">
    <location>
        <begin position="49"/>
        <end position="58"/>
    </location>
</feature>
<feature type="strand" evidence="14">
    <location>
        <begin position="67"/>
        <end position="74"/>
    </location>
</feature>
<feature type="strand" evidence="14">
    <location>
        <begin position="76"/>
        <end position="85"/>
    </location>
</feature>
<feature type="helix" evidence="14">
    <location>
        <begin position="86"/>
        <end position="92"/>
    </location>
</feature>
<feature type="turn" evidence="14">
    <location>
        <begin position="93"/>
        <end position="95"/>
    </location>
</feature>
<feature type="helix" evidence="14">
    <location>
        <begin position="102"/>
        <end position="121"/>
    </location>
</feature>
<feature type="turn" evidence="14">
    <location>
        <begin position="124"/>
        <end position="127"/>
    </location>
</feature>
<feature type="turn" evidence="14">
    <location>
        <begin position="131"/>
        <end position="134"/>
    </location>
</feature>
<feature type="helix" evidence="14">
    <location>
        <begin position="146"/>
        <end position="148"/>
    </location>
</feature>
<feature type="helix" evidence="14">
    <location>
        <begin position="149"/>
        <end position="162"/>
    </location>
</feature>
<feature type="strand" evidence="14">
    <location>
        <begin position="169"/>
        <end position="173"/>
    </location>
</feature>
<feature type="helix" evidence="14">
    <location>
        <begin position="175"/>
        <end position="182"/>
    </location>
</feature>
<feature type="strand" evidence="14">
    <location>
        <begin position="185"/>
        <end position="190"/>
    </location>
</feature>
<feature type="helix" evidence="14">
    <location>
        <begin position="191"/>
        <end position="199"/>
    </location>
</feature>
<feature type="strand" evidence="14">
    <location>
        <begin position="204"/>
        <end position="206"/>
    </location>
</feature>
<feature type="strand" evidence="14">
    <location>
        <begin position="211"/>
        <end position="217"/>
    </location>
</feature>
<feature type="strand" evidence="14">
    <location>
        <begin position="220"/>
        <end position="238"/>
    </location>
</feature>
<feature type="strand" evidence="14">
    <location>
        <begin position="240"/>
        <end position="255"/>
    </location>
</feature>
<feature type="strand" evidence="14">
    <location>
        <begin position="258"/>
        <end position="265"/>
    </location>
</feature>
<name>ENCAP_BRELN</name>
<keyword id="KW-0002">3D-structure</keyword>
<keyword id="KW-0903">Direct protein sequencing</keyword>
<keyword id="KW-1284">Encapsulin nanocompartment</keyword>
<comment type="function">
    <text evidence="1 2 3 9">Shell component of a type 1 encapsulin nanocompartment. Assembles into proteinaceous shells 23-24 nm in diameter with 2-2.5 nm thick walls. Endogenous cargo protein DyP (dye-decolorizing peroxidase) is targeted to the interior via its C-terminal extension; only 1 DyP hexamer is incorporated into each shell. Empty shells can be isolated in the absence of cargo (PubMed:19172747, PubMed:27355101, PubMed:29166561). Cargo encapsulation probably precedes assembly of the nanocompartment; may assemble or disassemble via dimers, subcomplexes with a distinct preference for even numbers of subunits are detected (Probable) (PubMed:27355101). Nanocompartments are stable against mechanical forces; loaded nanocompartments are less stable than empty ones (PubMed:27355101). Nanocompartments are stable between pH 5-10; they aggregate at pH 9-10 and start to disassemble at pH 11. They are stable in 1M NaCl, 1 M MgCl(2) and 1M CaCl(2), unstable in 20% DMSO (dimethylsulfoxide) and are stable in 20% but not 40% ethanol (PubMed:29166561).</text>
</comment>
<comment type="subunit">
    <text evidence="2 3 4">Homomultimeric (PubMed:7986050). This encapsulin nanocompartment is formed by 60 subunits, and encloses one Dyp homohexamer; partially assembled 58-subunit compartments with and without cargo are also purified. May assemble the shell from dimers (PubMed:27355101, PubMed:29166561). Monomers form pentamers, which assemble to form hollow shells with pores 5-8 Angstroms in diameter where 3 pentamers meet (PubMed:29166561).</text>
</comment>
<comment type="subcellular location">
    <subcellularLocation>
        <location evidence="1 2 3 4">Encapsulin nanocompartment</location>
    </subcellularLocation>
</comment>
<comment type="mass spectrometry" mass="1718200.0" method="Electrospray" evidence="2">
    <text>Empty 60-mer.</text>
</comment>
<comment type="biotechnology">
    <text evidence="3">Can be used as a bionanoreactor following immobilization on a glass surface. Nanocompartments filled with a fluorescent-labeled protein are stable for 5 years at 4 degrees Celsius and are taken up by mouse macrophages.</text>
</comment>
<comment type="miscellaneous">
    <text evidence="2 3">Other cargo proteins can be targeted to this compartment.</text>
</comment>
<comment type="similarity">
    <text evidence="10">Belongs to the encapsulin family. Family 1 subfamily.</text>
</comment>
<comment type="caution">
    <text evidence="1 4">Was originally thought to be a bacteriocin (PubMed:7986050); it has since been shown this is not the case (PubMed:19172747).</text>
</comment>
<gene>
    <name evidence="8" type="primary">enc</name>
    <name evidence="7" type="synonym">lin</name>
    <name evidence="12" type="ORF">BLIN101_00808</name>
    <name evidence="11" type="ORF">CXR29_00100</name>
</gene>